<name>TBB_METAN</name>
<evidence type="ECO:0000250" key="1">
    <source>
        <dbReference type="UniProtKB" id="P68363"/>
    </source>
</evidence>
<evidence type="ECO:0000250" key="2">
    <source>
        <dbReference type="UniProtKB" id="Q13509"/>
    </source>
</evidence>
<evidence type="ECO:0000256" key="3">
    <source>
        <dbReference type="SAM" id="MobiDB-lite"/>
    </source>
</evidence>
<evidence type="ECO:0000305" key="4"/>
<dbReference type="EMBL" id="AY995134">
    <property type="protein sequence ID" value="AAX94572.1"/>
    <property type="molecule type" value="Genomic_DNA"/>
</dbReference>
<dbReference type="SMR" id="Q52NY7"/>
<dbReference type="VEuPathDB" id="FungiDB:MAN_04224"/>
<dbReference type="GO" id="GO:0005737">
    <property type="term" value="C:cytoplasm"/>
    <property type="evidence" value="ECO:0007669"/>
    <property type="project" value="UniProtKB-KW"/>
</dbReference>
<dbReference type="GO" id="GO:0005874">
    <property type="term" value="C:microtubule"/>
    <property type="evidence" value="ECO:0007669"/>
    <property type="project" value="UniProtKB-KW"/>
</dbReference>
<dbReference type="GO" id="GO:0005525">
    <property type="term" value="F:GTP binding"/>
    <property type="evidence" value="ECO:0007669"/>
    <property type="project" value="UniProtKB-KW"/>
</dbReference>
<dbReference type="GO" id="GO:0003924">
    <property type="term" value="F:GTPase activity"/>
    <property type="evidence" value="ECO:0007669"/>
    <property type="project" value="InterPro"/>
</dbReference>
<dbReference type="GO" id="GO:0046872">
    <property type="term" value="F:metal ion binding"/>
    <property type="evidence" value="ECO:0007669"/>
    <property type="project" value="UniProtKB-KW"/>
</dbReference>
<dbReference type="GO" id="GO:0005200">
    <property type="term" value="F:structural constituent of cytoskeleton"/>
    <property type="evidence" value="ECO:0007669"/>
    <property type="project" value="InterPro"/>
</dbReference>
<dbReference type="GO" id="GO:0007017">
    <property type="term" value="P:microtubule-based process"/>
    <property type="evidence" value="ECO:0007669"/>
    <property type="project" value="InterPro"/>
</dbReference>
<dbReference type="CDD" id="cd02187">
    <property type="entry name" value="beta_tubulin"/>
    <property type="match status" value="1"/>
</dbReference>
<dbReference type="FunFam" id="1.10.287.600:FF:000003">
    <property type="entry name" value="Tubulin beta chain"/>
    <property type="match status" value="1"/>
</dbReference>
<dbReference type="FunFam" id="3.30.1330.20:FF:000002">
    <property type="entry name" value="Tubulin beta chain"/>
    <property type="match status" value="1"/>
</dbReference>
<dbReference type="FunFam" id="3.40.50.1440:FF:000009">
    <property type="entry name" value="Tubulin beta chain"/>
    <property type="match status" value="1"/>
</dbReference>
<dbReference type="Gene3D" id="1.10.287.600">
    <property type="entry name" value="Helix hairpin bin"/>
    <property type="match status" value="1"/>
</dbReference>
<dbReference type="Gene3D" id="3.30.1330.20">
    <property type="entry name" value="Tubulin/FtsZ, C-terminal domain"/>
    <property type="match status" value="1"/>
</dbReference>
<dbReference type="Gene3D" id="3.40.50.1440">
    <property type="entry name" value="Tubulin/FtsZ, GTPase domain"/>
    <property type="match status" value="1"/>
</dbReference>
<dbReference type="InterPro" id="IPR013838">
    <property type="entry name" value="Beta-tubulin_BS"/>
</dbReference>
<dbReference type="InterPro" id="IPR002453">
    <property type="entry name" value="Beta_tubulin"/>
</dbReference>
<dbReference type="InterPro" id="IPR008280">
    <property type="entry name" value="Tub_FtsZ_C"/>
</dbReference>
<dbReference type="InterPro" id="IPR000217">
    <property type="entry name" value="Tubulin"/>
</dbReference>
<dbReference type="InterPro" id="IPR037103">
    <property type="entry name" value="Tubulin/FtsZ-like_C"/>
</dbReference>
<dbReference type="InterPro" id="IPR018316">
    <property type="entry name" value="Tubulin/FtsZ_2-layer-sand-dom"/>
</dbReference>
<dbReference type="InterPro" id="IPR036525">
    <property type="entry name" value="Tubulin/FtsZ_GTPase_sf"/>
</dbReference>
<dbReference type="InterPro" id="IPR023123">
    <property type="entry name" value="Tubulin_C"/>
</dbReference>
<dbReference type="InterPro" id="IPR017975">
    <property type="entry name" value="Tubulin_CS"/>
</dbReference>
<dbReference type="InterPro" id="IPR003008">
    <property type="entry name" value="Tubulin_FtsZ_GTPase"/>
</dbReference>
<dbReference type="PANTHER" id="PTHR11588">
    <property type="entry name" value="TUBULIN"/>
    <property type="match status" value="1"/>
</dbReference>
<dbReference type="Pfam" id="PF00091">
    <property type="entry name" value="Tubulin"/>
    <property type="match status" value="1"/>
</dbReference>
<dbReference type="Pfam" id="PF03953">
    <property type="entry name" value="Tubulin_C"/>
    <property type="match status" value="1"/>
</dbReference>
<dbReference type="PRINTS" id="PR01163">
    <property type="entry name" value="BETATUBULIN"/>
</dbReference>
<dbReference type="PRINTS" id="PR01161">
    <property type="entry name" value="TUBULIN"/>
</dbReference>
<dbReference type="SMART" id="SM00864">
    <property type="entry name" value="Tubulin"/>
    <property type="match status" value="1"/>
</dbReference>
<dbReference type="SMART" id="SM00865">
    <property type="entry name" value="Tubulin_C"/>
    <property type="match status" value="1"/>
</dbReference>
<dbReference type="SUPFAM" id="SSF55307">
    <property type="entry name" value="Tubulin C-terminal domain-like"/>
    <property type="match status" value="1"/>
</dbReference>
<dbReference type="SUPFAM" id="SSF52490">
    <property type="entry name" value="Tubulin nucleotide-binding domain-like"/>
    <property type="match status" value="1"/>
</dbReference>
<dbReference type="PROSITE" id="PS00227">
    <property type="entry name" value="TUBULIN"/>
    <property type="match status" value="1"/>
</dbReference>
<dbReference type="PROSITE" id="PS00228">
    <property type="entry name" value="TUBULIN_B_AUTOREG"/>
    <property type="match status" value="1"/>
</dbReference>
<comment type="function">
    <text>Tubulin is the major constituent of microtubules, a cylinder consisting of laterally associated linear protofilaments composed of alpha- and beta-tubulin heterodimers. Microtubules grow by the addition of GTP-tubulin dimers to the microtubule end, where a stabilizing cap forms. Below the cap, tubulin dimers are in GDP-bound state, owing to GTPase activity of alpha-tubulin.</text>
</comment>
<comment type="cofactor">
    <cofactor evidence="1">
        <name>Mg(2+)</name>
        <dbReference type="ChEBI" id="CHEBI:18420"/>
    </cofactor>
</comment>
<comment type="subunit">
    <text>Dimer of alpha and beta chains. A typical microtubule is a hollow water-filled tube with an outer diameter of 25 nm and an inner diameter of 15 nM. Alpha-beta heterodimers associate head-to-tail to form protofilaments running lengthwise along the microtubule wall with the beta-tubulin subunit facing the microtubule plus end conferring a structural polarity. Microtubules usually have 13 protofilaments but different protofilament numbers can be found in some organisms and specialized cells.</text>
</comment>
<comment type="subcellular location">
    <subcellularLocation>
        <location>Cytoplasm</location>
        <location>Cytoskeleton</location>
    </subcellularLocation>
</comment>
<comment type="similarity">
    <text evidence="4">Belongs to the tubulin family.</text>
</comment>
<keyword id="KW-0963">Cytoplasm</keyword>
<keyword id="KW-0206">Cytoskeleton</keyword>
<keyword id="KW-0342">GTP-binding</keyword>
<keyword id="KW-0460">Magnesium</keyword>
<keyword id="KW-0479">Metal-binding</keyword>
<keyword id="KW-0493">Microtubule</keyword>
<keyword id="KW-0547">Nucleotide-binding</keyword>
<proteinExistence type="inferred from homology"/>
<reference key="1">
    <citation type="submission" date="2005-03" db="EMBL/GenBank/DDBJ databases">
        <title>Sequence analysis and amino acid alterations in the beta-tubulin gene of Metarhizium anisopliae that confer benomyl resistance using a PCR method.</title>
        <authorList>
            <person name="Kim S.K."/>
            <person name="Je Y.H."/>
            <person name="Boo K.S."/>
        </authorList>
    </citation>
    <scope>NUCLEOTIDE SEQUENCE [GENOMIC DNA]</scope>
</reference>
<organism>
    <name type="scientific">Metarhizium anisopliae</name>
    <name type="common">Entomophthora anisopliae</name>
    <dbReference type="NCBI Taxonomy" id="5530"/>
    <lineage>
        <taxon>Eukaryota</taxon>
        <taxon>Fungi</taxon>
        <taxon>Dikarya</taxon>
        <taxon>Ascomycota</taxon>
        <taxon>Pezizomycotina</taxon>
        <taxon>Sordariomycetes</taxon>
        <taxon>Hypocreomycetidae</taxon>
        <taxon>Hypocreales</taxon>
        <taxon>Clavicipitaceae</taxon>
        <taxon>Metarhizium</taxon>
    </lineage>
</organism>
<protein>
    <recommendedName>
        <fullName>Tubulin beta chain</fullName>
    </recommendedName>
    <alternativeName>
        <fullName>Beta-tubulin</fullName>
    </alternativeName>
</protein>
<feature type="chain" id="PRO_0000048419" description="Tubulin beta chain">
    <location>
        <begin position="1"/>
        <end position="448"/>
    </location>
</feature>
<feature type="region of interest" description="Disordered" evidence="3">
    <location>
        <begin position="425"/>
        <end position="448"/>
    </location>
</feature>
<feature type="compositionally biased region" description="Acidic residues" evidence="3">
    <location>
        <begin position="429"/>
        <end position="448"/>
    </location>
</feature>
<feature type="binding site" evidence="2">
    <location>
        <position position="11"/>
    </location>
    <ligand>
        <name>GTP</name>
        <dbReference type="ChEBI" id="CHEBI:37565"/>
    </ligand>
</feature>
<feature type="binding site" evidence="1">
    <location>
        <position position="69"/>
    </location>
    <ligand>
        <name>GTP</name>
        <dbReference type="ChEBI" id="CHEBI:37565"/>
    </ligand>
</feature>
<feature type="binding site" evidence="1">
    <location>
        <position position="69"/>
    </location>
    <ligand>
        <name>Mg(2+)</name>
        <dbReference type="ChEBI" id="CHEBI:18420"/>
    </ligand>
</feature>
<feature type="binding site" evidence="2">
    <location>
        <position position="138"/>
    </location>
    <ligand>
        <name>GTP</name>
        <dbReference type="ChEBI" id="CHEBI:37565"/>
    </ligand>
</feature>
<feature type="binding site" evidence="2">
    <location>
        <position position="142"/>
    </location>
    <ligand>
        <name>GTP</name>
        <dbReference type="ChEBI" id="CHEBI:37565"/>
    </ligand>
</feature>
<feature type="binding site" evidence="2">
    <location>
        <position position="143"/>
    </location>
    <ligand>
        <name>GTP</name>
        <dbReference type="ChEBI" id="CHEBI:37565"/>
    </ligand>
</feature>
<feature type="binding site" evidence="2">
    <location>
        <position position="144"/>
    </location>
    <ligand>
        <name>GTP</name>
        <dbReference type="ChEBI" id="CHEBI:37565"/>
    </ligand>
</feature>
<feature type="binding site" evidence="2">
    <location>
        <position position="204"/>
    </location>
    <ligand>
        <name>GTP</name>
        <dbReference type="ChEBI" id="CHEBI:37565"/>
    </ligand>
</feature>
<feature type="binding site" evidence="2">
    <location>
        <position position="226"/>
    </location>
    <ligand>
        <name>GTP</name>
        <dbReference type="ChEBI" id="CHEBI:37565"/>
    </ligand>
</feature>
<sequence>MREIVHLQTGQCGNQIGAAFWQTISGEHGLDSNGVYNGTSELQLERMSVYFNEASGNKYVPRAVLVDLEPGTMDAVRAGPFGQLFRPDNFVFGQSGAGNNWAKGHYTEGAELVDNVLDVVRREAEGCDCLQGFQITHSLGGGTGAGMGTLLISKIREEFPDRMMATFSVVPSPKVSDTVVEPYNATLSVHQLVENSDETFCIDNEALYDICMRTLKLSNPSYGDLNYLVSAVMSGVTTCLRFPGQLNSDLRKLAVNMVPFPRLHFFMVGFAPLTSRGAHSFRAVSVPELTQQMFDPKNMMAASDFRNGRYLTCSAIFRGKVAMKEVEDQMRNVQNKNSSYFVEWIPNNIQTALCAIPPRGLKMSSTFIGNSTSIQELFKRVGEQFTAMFRRKAFLHWYTGEGMDEMEFTEAESNMNDLVSEYQQYQDAGVDEEEEEYDEEAPVEEPLE</sequence>
<accession>Q52NY7</accession>